<organism>
    <name type="scientific">Acinetobacter baumannii (strain ATCC 17978 / DSM 105126 / CIP 53.77 / LMG 1025 / NCDC KC755 / 5377)</name>
    <dbReference type="NCBI Taxonomy" id="400667"/>
    <lineage>
        <taxon>Bacteria</taxon>
        <taxon>Pseudomonadati</taxon>
        <taxon>Pseudomonadota</taxon>
        <taxon>Gammaproteobacteria</taxon>
        <taxon>Moraxellales</taxon>
        <taxon>Moraxellaceae</taxon>
        <taxon>Acinetobacter</taxon>
        <taxon>Acinetobacter calcoaceticus/baumannii complex</taxon>
    </lineage>
</organism>
<evidence type="ECO:0000255" key="1">
    <source>
        <dbReference type="HAMAP-Rule" id="MF_01006"/>
    </source>
</evidence>
<dbReference type="EC" id="3.6.1.27" evidence="1"/>
<dbReference type="EMBL" id="CP000521">
    <property type="protein sequence ID" value="ABO13180.2"/>
    <property type="molecule type" value="Genomic_DNA"/>
</dbReference>
<dbReference type="RefSeq" id="WP_000426931.1">
    <property type="nucleotide sequence ID" value="NZ_CP053098.1"/>
</dbReference>
<dbReference type="SMR" id="A3M8D6"/>
<dbReference type="KEGG" id="acb:A1S_2768"/>
<dbReference type="HOGENOM" id="CLU_060296_2_0_6"/>
<dbReference type="GO" id="GO:0005886">
    <property type="term" value="C:plasma membrane"/>
    <property type="evidence" value="ECO:0007669"/>
    <property type="project" value="UniProtKB-SubCell"/>
</dbReference>
<dbReference type="GO" id="GO:0050380">
    <property type="term" value="F:undecaprenyl-diphosphatase activity"/>
    <property type="evidence" value="ECO:0007669"/>
    <property type="project" value="UniProtKB-UniRule"/>
</dbReference>
<dbReference type="GO" id="GO:0071555">
    <property type="term" value="P:cell wall organization"/>
    <property type="evidence" value="ECO:0007669"/>
    <property type="project" value="UniProtKB-KW"/>
</dbReference>
<dbReference type="GO" id="GO:0009252">
    <property type="term" value="P:peptidoglycan biosynthetic process"/>
    <property type="evidence" value="ECO:0007669"/>
    <property type="project" value="UniProtKB-KW"/>
</dbReference>
<dbReference type="GO" id="GO:0008360">
    <property type="term" value="P:regulation of cell shape"/>
    <property type="evidence" value="ECO:0007669"/>
    <property type="project" value="UniProtKB-KW"/>
</dbReference>
<dbReference type="GO" id="GO:0046677">
    <property type="term" value="P:response to antibiotic"/>
    <property type="evidence" value="ECO:0007669"/>
    <property type="project" value="UniProtKB-UniRule"/>
</dbReference>
<dbReference type="HAMAP" id="MF_01006">
    <property type="entry name" value="Undec_diphosphatase"/>
    <property type="match status" value="1"/>
</dbReference>
<dbReference type="InterPro" id="IPR003824">
    <property type="entry name" value="UppP"/>
</dbReference>
<dbReference type="NCBIfam" id="NF001389">
    <property type="entry name" value="PRK00281.1-2"/>
    <property type="match status" value="1"/>
</dbReference>
<dbReference type="NCBIfam" id="NF001390">
    <property type="entry name" value="PRK00281.1-4"/>
    <property type="match status" value="1"/>
</dbReference>
<dbReference type="NCBIfam" id="TIGR00753">
    <property type="entry name" value="undec_PP_bacA"/>
    <property type="match status" value="1"/>
</dbReference>
<dbReference type="PANTHER" id="PTHR30622">
    <property type="entry name" value="UNDECAPRENYL-DIPHOSPHATASE"/>
    <property type="match status" value="1"/>
</dbReference>
<dbReference type="PANTHER" id="PTHR30622:SF3">
    <property type="entry name" value="UNDECAPRENYL-DIPHOSPHATASE"/>
    <property type="match status" value="1"/>
</dbReference>
<dbReference type="Pfam" id="PF02673">
    <property type="entry name" value="BacA"/>
    <property type="match status" value="1"/>
</dbReference>
<accession>A3M8D6</accession>
<proteinExistence type="inferred from homology"/>
<protein>
    <recommendedName>
        <fullName evidence="1">Undecaprenyl-diphosphatase</fullName>
        <ecNumber evidence="1">3.6.1.27</ecNumber>
    </recommendedName>
    <alternativeName>
        <fullName evidence="1">Bacitracin resistance protein</fullName>
    </alternativeName>
    <alternativeName>
        <fullName evidence="1">Undecaprenyl pyrophosphate phosphatase</fullName>
    </alternativeName>
</protein>
<keyword id="KW-0046">Antibiotic resistance</keyword>
<keyword id="KW-0997">Cell inner membrane</keyword>
<keyword id="KW-1003">Cell membrane</keyword>
<keyword id="KW-0133">Cell shape</keyword>
<keyword id="KW-0961">Cell wall biogenesis/degradation</keyword>
<keyword id="KW-0378">Hydrolase</keyword>
<keyword id="KW-0472">Membrane</keyword>
<keyword id="KW-0573">Peptidoglycan synthesis</keyword>
<keyword id="KW-0812">Transmembrane</keyword>
<keyword id="KW-1133">Transmembrane helix</keyword>
<gene>
    <name evidence="1" type="primary">uppP</name>
    <name type="ordered locus">A1S_2768</name>
</gene>
<name>UPPP_ACIBT</name>
<sequence length="272" mass="29566">MENFEVIKALFLGFVEGLTEFLPISSTGHLILFGHIIDFHSDGGRVFEVVIQLGAILAVCWLYRQKIINLIKGFFSGDVESRHFAISVLIAFFPAVIIGVLAVDFIKSVLFSPIVVAIALIVGALIIFWVESKQFEHKTDDATKITFKQALLVGLAQCVAMIPGTSRSGATIVGGMFAGLSRKAATEFSFFLAMPTMLGAATFDLIKNADVLTSDNMVNIGVGFVAAFIAALLVVKALVLFVERHTLRVFAWYRIVLGVIILIAAMFFNLSA</sequence>
<comment type="function">
    <text evidence="1">Catalyzes the dephosphorylation of undecaprenyl diphosphate (UPP). Confers resistance to bacitracin.</text>
</comment>
<comment type="catalytic activity">
    <reaction evidence="1">
        <text>di-trans,octa-cis-undecaprenyl diphosphate + H2O = di-trans,octa-cis-undecaprenyl phosphate + phosphate + H(+)</text>
        <dbReference type="Rhea" id="RHEA:28094"/>
        <dbReference type="ChEBI" id="CHEBI:15377"/>
        <dbReference type="ChEBI" id="CHEBI:15378"/>
        <dbReference type="ChEBI" id="CHEBI:43474"/>
        <dbReference type="ChEBI" id="CHEBI:58405"/>
        <dbReference type="ChEBI" id="CHEBI:60392"/>
        <dbReference type="EC" id="3.6.1.27"/>
    </reaction>
</comment>
<comment type="subcellular location">
    <subcellularLocation>
        <location evidence="1">Cell inner membrane</location>
        <topology evidence="1">Multi-pass membrane protein</topology>
    </subcellularLocation>
</comment>
<comment type="miscellaneous">
    <text>Bacitracin is thought to be involved in the inhibition of peptidoglycan synthesis by sequestering undecaprenyl diphosphate, thereby reducing the pool of lipid carrier available.</text>
</comment>
<comment type="similarity">
    <text evidence="1">Belongs to the UppP family.</text>
</comment>
<feature type="chain" id="PRO_1000134675" description="Undecaprenyl-diphosphatase">
    <location>
        <begin position="1"/>
        <end position="272"/>
    </location>
</feature>
<feature type="transmembrane region" description="Helical" evidence="1">
    <location>
        <begin position="4"/>
        <end position="24"/>
    </location>
</feature>
<feature type="transmembrane region" description="Helical" evidence="1">
    <location>
        <begin position="43"/>
        <end position="63"/>
    </location>
</feature>
<feature type="transmembrane region" description="Helical" evidence="1">
    <location>
        <begin position="86"/>
        <end position="106"/>
    </location>
</feature>
<feature type="transmembrane region" description="Helical" evidence="1">
    <location>
        <begin position="109"/>
        <end position="129"/>
    </location>
</feature>
<feature type="transmembrane region" description="Helical" evidence="1">
    <location>
        <begin position="145"/>
        <end position="165"/>
    </location>
</feature>
<feature type="transmembrane region" description="Helical" evidence="1">
    <location>
        <begin position="186"/>
        <end position="206"/>
    </location>
</feature>
<feature type="transmembrane region" description="Helical" evidence="1">
    <location>
        <begin position="222"/>
        <end position="242"/>
    </location>
</feature>
<feature type="transmembrane region" description="Helical" evidence="1">
    <location>
        <begin position="249"/>
        <end position="269"/>
    </location>
</feature>
<reference key="1">
    <citation type="journal article" date="2007" name="Genes Dev.">
        <title>New insights into Acinetobacter baumannii pathogenesis revealed by high-density pyrosequencing and transposon mutagenesis.</title>
        <authorList>
            <person name="Smith M.G."/>
            <person name="Gianoulis T.A."/>
            <person name="Pukatzki S."/>
            <person name="Mekalanos J.J."/>
            <person name="Ornston L.N."/>
            <person name="Gerstein M."/>
            <person name="Snyder M."/>
        </authorList>
    </citation>
    <scope>NUCLEOTIDE SEQUENCE [LARGE SCALE GENOMIC DNA]</scope>
    <source>
        <strain>ATCC 17978 / DSM 105126 / CIP 53.77 / LMG 1025 / NCDC KC755 / 5377</strain>
    </source>
</reference>